<reference key="1">
    <citation type="journal article" date="2009" name="Proc. Natl. Acad. Sci. U.S.A.">
        <title>Hamiltonella defensa, genome evolution of protective bacterial endosymbiont from pathogenic ancestors.</title>
        <authorList>
            <person name="Degnan P.H."/>
            <person name="Yu Y."/>
            <person name="Sisneros N."/>
            <person name="Wing R.A."/>
            <person name="Moran N.A."/>
        </authorList>
    </citation>
    <scope>NUCLEOTIDE SEQUENCE [LARGE SCALE GENOMIC DNA]</scope>
    <source>
        <strain>5AT</strain>
    </source>
</reference>
<feature type="chain" id="PRO_1000213714" description="tRNA(Ile)-lysidine synthase">
    <location>
        <begin position="1"/>
        <end position="457"/>
    </location>
</feature>
<feature type="binding site" evidence="1">
    <location>
        <begin position="27"/>
        <end position="32"/>
    </location>
    <ligand>
        <name>ATP</name>
        <dbReference type="ChEBI" id="CHEBI:30616"/>
    </ligand>
</feature>
<gene>
    <name evidence="1" type="primary">tilS</name>
    <name type="ordered locus">HDEF_0213</name>
</gene>
<evidence type="ECO:0000255" key="1">
    <source>
        <dbReference type="HAMAP-Rule" id="MF_01161"/>
    </source>
</evidence>
<name>TILS_HAMD5</name>
<protein>
    <recommendedName>
        <fullName evidence="1">tRNA(Ile)-lysidine synthase</fullName>
        <ecNumber evidence="1">6.3.4.19</ecNumber>
    </recommendedName>
    <alternativeName>
        <fullName evidence="1">tRNA(Ile)-2-lysyl-cytidine synthase</fullName>
    </alternativeName>
    <alternativeName>
        <fullName evidence="1">tRNA(Ile)-lysidine synthetase</fullName>
    </alternativeName>
</protein>
<accession>C4K338</accession>
<sequence>MKKMASFSLTTLLKNLGKHHKFLVAFSGGLDSTVLLHGLLSLRDQNHLKLNIRAIHTHEKLIHRPENWSKDADQRLTHCQSQCEQWKVPLEVVKMEVEPRGKGIEAAARTVRYQIFSNALKKDEVLLTGHHQNDQCETVLLALKRGSGPAGLSGMPLAMPLGQSQLLRPQLSFSRHSLQLYALEKGILWMEDEDNQNDRFDRNFLRRHILPLLTARWPHFLESTSRSAALCAEQETLLDELLSEQLCQLQSQEGTLSIQGLAACSEVKRNALLRRWLDSKKVPMPSRDQLARLWKEVALAKSDAQPYLQCGEYQIRRFREHLYLFKSSKKSQPCPALFSIKWPFTPESENKLVLPDHLGELKCTPYRSEGQVIRAPQKNEVISIRFGLTGNIKILGRDRSRHSKKLWQELGIPPWERKRIPLLYFNETLIAAAEVFVTQKGEAKQGEPHCYLEWVKS</sequence>
<organism>
    <name type="scientific">Hamiltonella defensa subsp. Acyrthosiphon pisum (strain 5AT)</name>
    <dbReference type="NCBI Taxonomy" id="572265"/>
    <lineage>
        <taxon>Bacteria</taxon>
        <taxon>Pseudomonadati</taxon>
        <taxon>Pseudomonadota</taxon>
        <taxon>Gammaproteobacteria</taxon>
        <taxon>Enterobacterales</taxon>
        <taxon>Enterobacteriaceae</taxon>
        <taxon>aphid secondary symbionts</taxon>
        <taxon>Candidatus Hamiltonella</taxon>
    </lineage>
</organism>
<dbReference type="EC" id="6.3.4.19" evidence="1"/>
<dbReference type="EMBL" id="CP001277">
    <property type="protein sequence ID" value="ACQ66981.1"/>
    <property type="molecule type" value="Genomic_DNA"/>
</dbReference>
<dbReference type="RefSeq" id="WP_012737946.1">
    <property type="nucleotide sequence ID" value="NC_012751.1"/>
</dbReference>
<dbReference type="SMR" id="C4K338"/>
<dbReference type="STRING" id="572265.HDEF_0213"/>
<dbReference type="GeneID" id="66260141"/>
<dbReference type="KEGG" id="hde:HDEF_0213"/>
<dbReference type="eggNOG" id="COG0037">
    <property type="taxonomic scope" value="Bacteria"/>
</dbReference>
<dbReference type="HOGENOM" id="CLU_018869_2_0_6"/>
<dbReference type="Proteomes" id="UP000002334">
    <property type="component" value="Chromosome"/>
</dbReference>
<dbReference type="GO" id="GO:0005737">
    <property type="term" value="C:cytoplasm"/>
    <property type="evidence" value="ECO:0007669"/>
    <property type="project" value="UniProtKB-SubCell"/>
</dbReference>
<dbReference type="GO" id="GO:0005524">
    <property type="term" value="F:ATP binding"/>
    <property type="evidence" value="ECO:0007669"/>
    <property type="project" value="UniProtKB-UniRule"/>
</dbReference>
<dbReference type="GO" id="GO:0032267">
    <property type="term" value="F:tRNA(Ile)-lysidine synthase activity"/>
    <property type="evidence" value="ECO:0007669"/>
    <property type="project" value="UniProtKB-EC"/>
</dbReference>
<dbReference type="GO" id="GO:0006400">
    <property type="term" value="P:tRNA modification"/>
    <property type="evidence" value="ECO:0007669"/>
    <property type="project" value="UniProtKB-UniRule"/>
</dbReference>
<dbReference type="CDD" id="cd01992">
    <property type="entry name" value="TilS_N"/>
    <property type="match status" value="1"/>
</dbReference>
<dbReference type="Gene3D" id="1.20.59.20">
    <property type="match status" value="1"/>
</dbReference>
<dbReference type="Gene3D" id="3.40.50.620">
    <property type="entry name" value="HUPs"/>
    <property type="match status" value="1"/>
</dbReference>
<dbReference type="HAMAP" id="MF_01161">
    <property type="entry name" value="tRNA_Ile_lys_synt"/>
    <property type="match status" value="1"/>
</dbReference>
<dbReference type="InterPro" id="IPR012796">
    <property type="entry name" value="Lysidine-tRNA-synth_C"/>
</dbReference>
<dbReference type="InterPro" id="IPR014729">
    <property type="entry name" value="Rossmann-like_a/b/a_fold"/>
</dbReference>
<dbReference type="InterPro" id="IPR011063">
    <property type="entry name" value="TilS/TtcA_N"/>
</dbReference>
<dbReference type="InterPro" id="IPR012094">
    <property type="entry name" value="tRNA_Ile_lys_synt"/>
</dbReference>
<dbReference type="InterPro" id="IPR012795">
    <property type="entry name" value="tRNA_Ile_lys_synt_N"/>
</dbReference>
<dbReference type="InterPro" id="IPR015262">
    <property type="entry name" value="tRNA_Ile_lys_synt_subst-bd"/>
</dbReference>
<dbReference type="NCBIfam" id="TIGR02433">
    <property type="entry name" value="lysidine_TilS_C"/>
    <property type="match status" value="1"/>
</dbReference>
<dbReference type="NCBIfam" id="TIGR02432">
    <property type="entry name" value="lysidine_TilS_N"/>
    <property type="match status" value="1"/>
</dbReference>
<dbReference type="PANTHER" id="PTHR43033">
    <property type="entry name" value="TRNA(ILE)-LYSIDINE SYNTHASE-RELATED"/>
    <property type="match status" value="1"/>
</dbReference>
<dbReference type="PANTHER" id="PTHR43033:SF1">
    <property type="entry name" value="TRNA(ILE)-LYSIDINE SYNTHASE-RELATED"/>
    <property type="match status" value="1"/>
</dbReference>
<dbReference type="Pfam" id="PF01171">
    <property type="entry name" value="ATP_bind_3"/>
    <property type="match status" value="1"/>
</dbReference>
<dbReference type="Pfam" id="PF09179">
    <property type="entry name" value="TilS"/>
    <property type="match status" value="1"/>
</dbReference>
<dbReference type="Pfam" id="PF11734">
    <property type="entry name" value="TilS_C"/>
    <property type="match status" value="1"/>
</dbReference>
<dbReference type="SMART" id="SM00977">
    <property type="entry name" value="TilS_C"/>
    <property type="match status" value="1"/>
</dbReference>
<dbReference type="SUPFAM" id="SSF52402">
    <property type="entry name" value="Adenine nucleotide alpha hydrolases-like"/>
    <property type="match status" value="1"/>
</dbReference>
<dbReference type="SUPFAM" id="SSF82829">
    <property type="entry name" value="MesJ substrate recognition domain-like"/>
    <property type="match status" value="1"/>
</dbReference>
<dbReference type="SUPFAM" id="SSF56037">
    <property type="entry name" value="PheT/TilS domain"/>
    <property type="match status" value="1"/>
</dbReference>
<proteinExistence type="inferred from homology"/>
<keyword id="KW-0067">ATP-binding</keyword>
<keyword id="KW-0963">Cytoplasm</keyword>
<keyword id="KW-0436">Ligase</keyword>
<keyword id="KW-0547">Nucleotide-binding</keyword>
<keyword id="KW-0819">tRNA processing</keyword>
<comment type="function">
    <text evidence="1">Ligates lysine onto the cytidine present at position 34 of the AUA codon-specific tRNA(Ile) that contains the anticodon CAU, in an ATP-dependent manner. Cytidine is converted to lysidine, thus changing the amino acid specificity of the tRNA from methionine to isoleucine.</text>
</comment>
<comment type="catalytic activity">
    <reaction evidence="1">
        <text>cytidine(34) in tRNA(Ile2) + L-lysine + ATP = lysidine(34) in tRNA(Ile2) + AMP + diphosphate + H(+)</text>
        <dbReference type="Rhea" id="RHEA:43744"/>
        <dbReference type="Rhea" id="RHEA-COMP:10625"/>
        <dbReference type="Rhea" id="RHEA-COMP:10670"/>
        <dbReference type="ChEBI" id="CHEBI:15378"/>
        <dbReference type="ChEBI" id="CHEBI:30616"/>
        <dbReference type="ChEBI" id="CHEBI:32551"/>
        <dbReference type="ChEBI" id="CHEBI:33019"/>
        <dbReference type="ChEBI" id="CHEBI:82748"/>
        <dbReference type="ChEBI" id="CHEBI:83665"/>
        <dbReference type="ChEBI" id="CHEBI:456215"/>
        <dbReference type="EC" id="6.3.4.19"/>
    </reaction>
</comment>
<comment type="subcellular location">
    <subcellularLocation>
        <location evidence="1">Cytoplasm</location>
    </subcellularLocation>
</comment>
<comment type="domain">
    <text>The N-terminal region contains the highly conserved SGGXDS motif, predicted to be a P-loop motif involved in ATP binding.</text>
</comment>
<comment type="similarity">
    <text evidence="1">Belongs to the tRNA(Ile)-lysidine synthase family.</text>
</comment>